<comment type="function">
    <text evidence="1">Specifically dimethylates two adjacent adenosines (A1518 and A1519) in the loop of a conserved hairpin near the 3'-end of 16S rRNA in the 30S particle. May play a critical role in biogenesis of 30S subunits.</text>
</comment>
<comment type="catalytic activity">
    <reaction evidence="1">
        <text>adenosine(1518)/adenosine(1519) in 16S rRNA + 4 S-adenosyl-L-methionine = N(6)-dimethyladenosine(1518)/N(6)-dimethyladenosine(1519) in 16S rRNA + 4 S-adenosyl-L-homocysteine + 4 H(+)</text>
        <dbReference type="Rhea" id="RHEA:19609"/>
        <dbReference type="Rhea" id="RHEA-COMP:10232"/>
        <dbReference type="Rhea" id="RHEA-COMP:10233"/>
        <dbReference type="ChEBI" id="CHEBI:15378"/>
        <dbReference type="ChEBI" id="CHEBI:57856"/>
        <dbReference type="ChEBI" id="CHEBI:59789"/>
        <dbReference type="ChEBI" id="CHEBI:74411"/>
        <dbReference type="ChEBI" id="CHEBI:74493"/>
        <dbReference type="EC" id="2.1.1.182"/>
    </reaction>
</comment>
<comment type="subcellular location">
    <subcellularLocation>
        <location evidence="1">Cytoplasm</location>
    </subcellularLocation>
</comment>
<comment type="similarity">
    <text evidence="1">Belongs to the class I-like SAM-binding methyltransferase superfamily. rRNA adenine N(6)-methyltransferase family. RsmA subfamily.</text>
</comment>
<gene>
    <name evidence="1" type="primary">rsmA</name>
    <name evidence="1" type="synonym">ksgA</name>
    <name type="ordered locus">PPA0526</name>
</gene>
<sequence length="298" mass="31273">MSETGLLNPASIRRIADQIGLRPTKTRGQNFVHDANTVRRIVSLAQVGAADRVIEVGPGLGSLTLGLLETGAEVVAIEIDEVLANQLPGTVAERMPGAAERLEVVLSDALDVKVIPGAEPTALVANLPYNVAVPVLLHMLAICPQWSTGVVMVQSEVADRLVAAPGSKIYGVPSAKLAWYAEAIRVGNVPPTVFWPVPNVDSGLVRITRRRPPHVDGRDPRVTRSQVFRVVDAAFASRRKMLRSALAGLCGGSMAASELITAAGIDPTARGEALDIGDLARVVEALAQAGALSDSGQV</sequence>
<organism>
    <name type="scientific">Cutibacterium acnes (strain DSM 16379 / KPA171202)</name>
    <name type="common">Propionibacterium acnes</name>
    <dbReference type="NCBI Taxonomy" id="267747"/>
    <lineage>
        <taxon>Bacteria</taxon>
        <taxon>Bacillati</taxon>
        <taxon>Actinomycetota</taxon>
        <taxon>Actinomycetes</taxon>
        <taxon>Propionibacteriales</taxon>
        <taxon>Propionibacteriaceae</taxon>
        <taxon>Cutibacterium</taxon>
    </lineage>
</organism>
<name>RSMA_CUTAK</name>
<proteinExistence type="inferred from homology"/>
<keyword id="KW-0963">Cytoplasm</keyword>
<keyword id="KW-0489">Methyltransferase</keyword>
<keyword id="KW-0694">RNA-binding</keyword>
<keyword id="KW-0698">rRNA processing</keyword>
<keyword id="KW-0949">S-adenosyl-L-methionine</keyword>
<keyword id="KW-0808">Transferase</keyword>
<dbReference type="EC" id="2.1.1.182" evidence="1"/>
<dbReference type="EMBL" id="AE017283">
    <property type="protein sequence ID" value="AAT82279.1"/>
    <property type="molecule type" value="Genomic_DNA"/>
</dbReference>
<dbReference type="RefSeq" id="WP_002516707.1">
    <property type="nucleotide sequence ID" value="NZ_CP025935.1"/>
</dbReference>
<dbReference type="SMR" id="Q6AAD7"/>
<dbReference type="EnsemblBacteria" id="AAT82279">
    <property type="protein sequence ID" value="AAT82279"/>
    <property type="gene ID" value="PPA0526"/>
</dbReference>
<dbReference type="GeneID" id="92856508"/>
<dbReference type="KEGG" id="pac:PPA0526"/>
<dbReference type="eggNOG" id="COG0030">
    <property type="taxonomic scope" value="Bacteria"/>
</dbReference>
<dbReference type="HOGENOM" id="CLU_041220_1_1_11"/>
<dbReference type="Proteomes" id="UP000000603">
    <property type="component" value="Chromosome"/>
</dbReference>
<dbReference type="GO" id="GO:0005829">
    <property type="term" value="C:cytosol"/>
    <property type="evidence" value="ECO:0007669"/>
    <property type="project" value="TreeGrafter"/>
</dbReference>
<dbReference type="GO" id="GO:0052908">
    <property type="term" value="F:16S rRNA (adenine(1518)-N(6)/adenine(1519)-N(6))-dimethyltransferase activity"/>
    <property type="evidence" value="ECO:0007669"/>
    <property type="project" value="UniProtKB-EC"/>
</dbReference>
<dbReference type="GO" id="GO:0003723">
    <property type="term" value="F:RNA binding"/>
    <property type="evidence" value="ECO:0007669"/>
    <property type="project" value="UniProtKB-KW"/>
</dbReference>
<dbReference type="FunFam" id="3.40.50.150:FF:000023">
    <property type="entry name" value="Ribosomal RNA small subunit methyltransferase A"/>
    <property type="match status" value="1"/>
</dbReference>
<dbReference type="Gene3D" id="1.10.8.100">
    <property type="entry name" value="Ribosomal RNA adenine dimethylase-like, domain 2"/>
    <property type="match status" value="1"/>
</dbReference>
<dbReference type="Gene3D" id="3.40.50.150">
    <property type="entry name" value="Vaccinia Virus protein VP39"/>
    <property type="match status" value="1"/>
</dbReference>
<dbReference type="HAMAP" id="MF_00607">
    <property type="entry name" value="16SrRNA_methyltr_A"/>
    <property type="match status" value="1"/>
</dbReference>
<dbReference type="InterPro" id="IPR001737">
    <property type="entry name" value="KsgA/Erm"/>
</dbReference>
<dbReference type="InterPro" id="IPR023165">
    <property type="entry name" value="rRNA_Ade_diMease-like_C"/>
</dbReference>
<dbReference type="InterPro" id="IPR020596">
    <property type="entry name" value="rRNA_Ade_Mease_Trfase_CS"/>
</dbReference>
<dbReference type="InterPro" id="IPR020598">
    <property type="entry name" value="rRNA_Ade_methylase_Trfase_N"/>
</dbReference>
<dbReference type="InterPro" id="IPR011530">
    <property type="entry name" value="rRNA_adenine_dimethylase"/>
</dbReference>
<dbReference type="InterPro" id="IPR029063">
    <property type="entry name" value="SAM-dependent_MTases_sf"/>
</dbReference>
<dbReference type="NCBIfam" id="TIGR00755">
    <property type="entry name" value="ksgA"/>
    <property type="match status" value="1"/>
</dbReference>
<dbReference type="PANTHER" id="PTHR11727">
    <property type="entry name" value="DIMETHYLADENOSINE TRANSFERASE"/>
    <property type="match status" value="1"/>
</dbReference>
<dbReference type="PANTHER" id="PTHR11727:SF7">
    <property type="entry name" value="DIMETHYLADENOSINE TRANSFERASE-RELATED"/>
    <property type="match status" value="1"/>
</dbReference>
<dbReference type="Pfam" id="PF00398">
    <property type="entry name" value="RrnaAD"/>
    <property type="match status" value="1"/>
</dbReference>
<dbReference type="SMART" id="SM00650">
    <property type="entry name" value="rADc"/>
    <property type="match status" value="1"/>
</dbReference>
<dbReference type="SUPFAM" id="SSF53335">
    <property type="entry name" value="S-adenosyl-L-methionine-dependent methyltransferases"/>
    <property type="match status" value="1"/>
</dbReference>
<dbReference type="PROSITE" id="PS01131">
    <property type="entry name" value="RRNA_A_DIMETH"/>
    <property type="match status" value="1"/>
</dbReference>
<dbReference type="PROSITE" id="PS51689">
    <property type="entry name" value="SAM_RNA_A_N6_MT"/>
    <property type="match status" value="1"/>
</dbReference>
<feature type="chain" id="PRO_0000101582" description="Ribosomal RNA small subunit methyltransferase A">
    <location>
        <begin position="1"/>
        <end position="298"/>
    </location>
</feature>
<feature type="binding site" evidence="1">
    <location>
        <position position="30"/>
    </location>
    <ligand>
        <name>S-adenosyl-L-methionine</name>
        <dbReference type="ChEBI" id="CHEBI:59789"/>
    </ligand>
</feature>
<feature type="binding site" evidence="1">
    <location>
        <position position="32"/>
    </location>
    <ligand>
        <name>S-adenosyl-L-methionine</name>
        <dbReference type="ChEBI" id="CHEBI:59789"/>
    </ligand>
</feature>
<feature type="binding site" evidence="1">
    <location>
        <position position="57"/>
    </location>
    <ligand>
        <name>S-adenosyl-L-methionine</name>
        <dbReference type="ChEBI" id="CHEBI:59789"/>
    </ligand>
</feature>
<feature type="binding site" evidence="1">
    <location>
        <position position="78"/>
    </location>
    <ligand>
        <name>S-adenosyl-L-methionine</name>
        <dbReference type="ChEBI" id="CHEBI:59789"/>
    </ligand>
</feature>
<feature type="binding site" evidence="1">
    <location>
        <position position="108"/>
    </location>
    <ligand>
        <name>S-adenosyl-L-methionine</name>
        <dbReference type="ChEBI" id="CHEBI:59789"/>
    </ligand>
</feature>
<feature type="binding site" evidence="1">
    <location>
        <position position="126"/>
    </location>
    <ligand>
        <name>S-adenosyl-L-methionine</name>
        <dbReference type="ChEBI" id="CHEBI:59789"/>
    </ligand>
</feature>
<protein>
    <recommendedName>
        <fullName evidence="1">Ribosomal RNA small subunit methyltransferase A</fullName>
        <ecNumber evidence="1">2.1.1.182</ecNumber>
    </recommendedName>
    <alternativeName>
        <fullName evidence="1">16S rRNA (adenine(1518)-N(6)/adenine(1519)-N(6))-dimethyltransferase</fullName>
    </alternativeName>
    <alternativeName>
        <fullName evidence="1">16S rRNA dimethyladenosine transferase</fullName>
    </alternativeName>
    <alternativeName>
        <fullName evidence="1">16S rRNA dimethylase</fullName>
    </alternativeName>
    <alternativeName>
        <fullName evidence="1">S-adenosylmethionine-6-N', N'-adenosyl(rRNA) dimethyltransferase</fullName>
    </alternativeName>
</protein>
<accession>Q6AAD7</accession>
<reference key="1">
    <citation type="journal article" date="2004" name="Science">
        <title>The complete genome sequence of Propionibacterium acnes, a commensal of human skin.</title>
        <authorList>
            <person name="Brueggemann H."/>
            <person name="Henne A."/>
            <person name="Hoster F."/>
            <person name="Liesegang H."/>
            <person name="Wiezer A."/>
            <person name="Strittmatter A."/>
            <person name="Hujer S."/>
            <person name="Duerre P."/>
            <person name="Gottschalk G."/>
        </authorList>
    </citation>
    <scope>NUCLEOTIDE SEQUENCE [LARGE SCALE GENOMIC DNA]</scope>
    <source>
        <strain>DSM 16379 / KPA171202</strain>
    </source>
</reference>
<evidence type="ECO:0000255" key="1">
    <source>
        <dbReference type="HAMAP-Rule" id="MF_00607"/>
    </source>
</evidence>